<reference key="1">
    <citation type="journal article" date="1994" name="Ping Tu Hsueh Pao">
        <title>Molecular cloning and sequencing of the rice dwarf virus genome segment S6.</title>
        <authorList>
            <person name="Liu Y."/>
            <person name="Li Y."/>
            <person name="Pan N."/>
            <person name="Chen Z."/>
        </authorList>
    </citation>
    <scope>NUCLEOTIDE SEQUENCE [MRNA]</scope>
</reference>
<reference key="2">
    <citation type="journal article" date="2004" name="J. Virol.">
        <title>Rice dwarf phytoreovirus segment S6-encoded nonstructural protein has a cell-to-cell movement function.</title>
        <authorList>
            <person name="Li Y."/>
            <person name="Bao Y.M."/>
            <person name="Wei C.H."/>
            <person name="Kang Z.S."/>
            <person name="Zhong Y.W."/>
            <person name="Mao P."/>
            <person name="Wu G."/>
            <person name="Chen Z.L."/>
            <person name="Schiemann J."/>
            <person name="Nelson R.S."/>
        </authorList>
    </citation>
    <scope>FUNCTION</scope>
    <scope>SUBCELLULAR LOCATION</scope>
</reference>
<reference key="3">
    <citation type="journal article" date="2006" name="J. Gen. Virol.">
        <title>Pns12 protein of Rice dwarf virus is essential for formation of viroplasms and nucleation of viral-assembly complexes.</title>
        <authorList>
            <person name="Wei T."/>
            <person name="Shimizu T."/>
            <person name="Hagiwara K."/>
            <person name="Kikuchi A."/>
            <person name="Moriyasu Y."/>
            <person name="Suzuki N."/>
            <person name="Chen H."/>
            <person name="Omura T."/>
        </authorList>
    </citation>
    <scope>FUNCTION</scope>
    <scope>SUBCELLULAR LOCATION</scope>
</reference>
<name>MVP_RDVF</name>
<sequence>MDTETLCLITADSGKVYGILKAIFGDESEIVKKLIDFDVSIRVVPLNLGLLNIFRDNAADLDNADLMKRRFGNTMGSRIVEAYRRSQDSKYKRNVCKTTGLLVCLFGGGLGLSREADKHKKFVEGKSHNILSVEMLKRALSIGGQNVDANKISSFWFATYTIFTTVYSPRLRYQAGSSKRIIALSESRNQYRSNLFWDLRDDSSHEVMSMVHVLSALFASALTAYISTRVRHELTQGNDERESLNNVLVWLKTLTFEPSTIALIAYIWLVSPTDAQATITIGSVMESESSDDFPDIVKILSYTSNTMLPVQLLEDGRTAYCSVADGYTRHTTALTLITDYNSSHMSDKFGVLINIVKFEHAYALHYVHHKPRDGKEMTITSPSSEMMFTSVVVTPLSSYPLIHARNAVIDWLRTFVHMFPDSGSLVIPADSYTWIHNLAQDMFPWVQLSTTLDIRDDHYFQVLCDCLSLGRDSRNHAKVEKLIKYMKASVYNFTSEARGNMLLAITVYK</sequence>
<dbReference type="EMBL" id="U36564">
    <property type="protein sequence ID" value="AAA88763.1"/>
    <property type="molecule type" value="mRNA"/>
</dbReference>
<dbReference type="RefSeq" id="NP_620533.1">
    <property type="nucleotide sequence ID" value="NC_003763.1"/>
</dbReference>
<dbReference type="GeneID" id="956498"/>
<dbReference type="KEGG" id="vg:956498"/>
<dbReference type="Proteomes" id="UP000002239">
    <property type="component" value="Genome"/>
</dbReference>
<dbReference type="GO" id="GO:0030430">
    <property type="term" value="C:host cell cytoplasm"/>
    <property type="evidence" value="ECO:0007669"/>
    <property type="project" value="UniProtKB-SubCell"/>
</dbReference>
<dbReference type="GO" id="GO:0044219">
    <property type="term" value="C:host cell plasmodesma"/>
    <property type="evidence" value="ECO:0007669"/>
    <property type="project" value="UniProtKB-SubCell"/>
</dbReference>
<protein>
    <recommendedName>
        <fullName>Movement protein</fullName>
    </recommendedName>
    <alternativeName>
        <fullName>Non-structural protein 6</fullName>
        <shortName>Pns6</shortName>
    </alternativeName>
</protein>
<organism>
    <name type="scientific">Rice dwarf virus (isolate Fujian)</name>
    <name type="common">RDV</name>
    <dbReference type="NCBI Taxonomy" id="142804"/>
    <lineage>
        <taxon>Viruses</taxon>
        <taxon>Riboviria</taxon>
        <taxon>Orthornavirae</taxon>
        <taxon>Duplornaviricota</taxon>
        <taxon>Resentoviricetes</taxon>
        <taxon>Reovirales</taxon>
        <taxon>Sedoreoviridae</taxon>
        <taxon>Phytoreovirus</taxon>
        <taxon>Rice dwarf virus</taxon>
    </lineage>
</organism>
<organismHost>
    <name type="scientific">Alopecurus aequalis</name>
    <dbReference type="NCBI Taxonomy" id="114194"/>
</organismHost>
<organismHost>
    <name type="scientific">Echinochloa crus-galli</name>
    <name type="common">Barnyard grass</name>
    <name type="synonym">Panicum crus-galli</name>
    <dbReference type="NCBI Taxonomy" id="90397"/>
</organismHost>
<organismHost>
    <name type="scientific">Nephotettix cincticeps</name>
    <name type="common">Green rice leafhopper</name>
    <name type="synonym">Selenocephalus cincticeps</name>
    <dbReference type="NCBI Taxonomy" id="94400"/>
</organismHost>
<organismHost>
    <name type="scientific">Oryza sativa</name>
    <name type="common">Rice</name>
    <dbReference type="NCBI Taxonomy" id="4530"/>
</organismHost>
<organismHost>
    <name type="scientific">Paspalum</name>
    <dbReference type="NCBI Taxonomy" id="147271"/>
</organismHost>
<comment type="function">
    <text evidence="1 2">Transports viral genome to neighboring plant cells directly through plasmosdesmata, without any budding. The movement protein allows efficient cell to cell propagation, by bypassing the host cell wall barrier.</text>
</comment>
<comment type="subcellular location">
    <subcellularLocation>
        <location evidence="1">Host cell junction</location>
        <location evidence="1">Host plasmodesma</location>
    </subcellularLocation>
    <subcellularLocation>
        <location evidence="2">Host cytoplasm</location>
    </subcellularLocation>
    <text>Constituent of spherical cytoplasmic structures, called virus factories, that appear early after infection and are the site of viral replication and packaging.</text>
</comment>
<accession>Q85438</accession>
<keyword id="KW-1031">Host cell junction</keyword>
<keyword id="KW-1035">Host cytoplasm</keyword>
<keyword id="KW-1185">Reference proteome</keyword>
<proteinExistence type="evidence at transcript level"/>
<evidence type="ECO:0000269" key="1">
    <source>
    </source>
</evidence>
<evidence type="ECO:0000269" key="2">
    <source>
    </source>
</evidence>
<feature type="chain" id="PRO_0000222789" description="Movement protein">
    <location>
        <begin position="1"/>
        <end position="509"/>
    </location>
</feature>